<organism>
    <name type="scientific">Geobacillus sp. (strain WCH70)</name>
    <dbReference type="NCBI Taxonomy" id="471223"/>
    <lineage>
        <taxon>Bacteria</taxon>
        <taxon>Bacillati</taxon>
        <taxon>Bacillota</taxon>
        <taxon>Bacilli</taxon>
        <taxon>Bacillales</taxon>
        <taxon>Anoxybacillaceae</taxon>
        <taxon>Geobacillus</taxon>
    </lineage>
</organism>
<name>RL35_GEOSW</name>
<keyword id="KW-0687">Ribonucleoprotein</keyword>
<keyword id="KW-0689">Ribosomal protein</keyword>
<reference key="1">
    <citation type="submission" date="2009-06" db="EMBL/GenBank/DDBJ databases">
        <title>Complete sequence of chromosome of Geopacillus sp. WCH70.</title>
        <authorList>
            <consortium name="US DOE Joint Genome Institute"/>
            <person name="Lucas S."/>
            <person name="Copeland A."/>
            <person name="Lapidus A."/>
            <person name="Glavina del Rio T."/>
            <person name="Dalin E."/>
            <person name="Tice H."/>
            <person name="Bruce D."/>
            <person name="Goodwin L."/>
            <person name="Pitluck S."/>
            <person name="Chertkov O."/>
            <person name="Brettin T."/>
            <person name="Detter J.C."/>
            <person name="Han C."/>
            <person name="Larimer F."/>
            <person name="Land M."/>
            <person name="Hauser L."/>
            <person name="Kyrpides N."/>
            <person name="Mikhailova N."/>
            <person name="Brumm P."/>
            <person name="Mead D.A."/>
            <person name="Richardson P."/>
        </authorList>
    </citation>
    <scope>NUCLEOTIDE SEQUENCE [LARGE SCALE GENOMIC DNA]</scope>
    <source>
        <strain>WCH70</strain>
    </source>
</reference>
<gene>
    <name evidence="1" type="primary">rpmI</name>
    <name type="ordered locus">GWCH70_2659</name>
</gene>
<feature type="chain" id="PRO_1000211706" description="Large ribosomal subunit protein bL35">
    <location>
        <begin position="1"/>
        <end position="66"/>
    </location>
</feature>
<feature type="region of interest" description="Disordered" evidence="2">
    <location>
        <begin position="1"/>
        <end position="48"/>
    </location>
</feature>
<feature type="compositionally biased region" description="Basic residues" evidence="2">
    <location>
        <begin position="1"/>
        <end position="26"/>
    </location>
</feature>
<comment type="similarity">
    <text evidence="1">Belongs to the bacterial ribosomal protein bL35 family.</text>
</comment>
<accession>C5D637</accession>
<sequence>MPKMKTHRGAAKRFKKTGTGKLKRGHAYTSHLFANKTQKQKRKLRKATLVSPGDFKRIRQLLDNLK</sequence>
<dbReference type="EMBL" id="CP001638">
    <property type="protein sequence ID" value="ACS25353.1"/>
    <property type="molecule type" value="Genomic_DNA"/>
</dbReference>
<dbReference type="SMR" id="C5D637"/>
<dbReference type="STRING" id="471223.GWCH70_2659"/>
<dbReference type="KEGG" id="gwc:GWCH70_2659"/>
<dbReference type="eggNOG" id="COG0291">
    <property type="taxonomic scope" value="Bacteria"/>
</dbReference>
<dbReference type="HOGENOM" id="CLU_169643_3_0_9"/>
<dbReference type="OrthoDB" id="47476at2"/>
<dbReference type="GO" id="GO:0022625">
    <property type="term" value="C:cytosolic large ribosomal subunit"/>
    <property type="evidence" value="ECO:0007669"/>
    <property type="project" value="TreeGrafter"/>
</dbReference>
<dbReference type="GO" id="GO:0003735">
    <property type="term" value="F:structural constituent of ribosome"/>
    <property type="evidence" value="ECO:0007669"/>
    <property type="project" value="InterPro"/>
</dbReference>
<dbReference type="GO" id="GO:0006412">
    <property type="term" value="P:translation"/>
    <property type="evidence" value="ECO:0007669"/>
    <property type="project" value="UniProtKB-UniRule"/>
</dbReference>
<dbReference type="FunFam" id="4.10.410.60:FF:000001">
    <property type="entry name" value="50S ribosomal protein L35"/>
    <property type="match status" value="1"/>
</dbReference>
<dbReference type="Gene3D" id="4.10.410.60">
    <property type="match status" value="1"/>
</dbReference>
<dbReference type="HAMAP" id="MF_00514">
    <property type="entry name" value="Ribosomal_bL35"/>
    <property type="match status" value="1"/>
</dbReference>
<dbReference type="InterPro" id="IPR001706">
    <property type="entry name" value="Ribosomal_bL35"/>
</dbReference>
<dbReference type="InterPro" id="IPR021137">
    <property type="entry name" value="Ribosomal_bL35-like"/>
</dbReference>
<dbReference type="InterPro" id="IPR018265">
    <property type="entry name" value="Ribosomal_bL35_CS"/>
</dbReference>
<dbReference type="InterPro" id="IPR037229">
    <property type="entry name" value="Ribosomal_bL35_sf"/>
</dbReference>
<dbReference type="NCBIfam" id="TIGR00001">
    <property type="entry name" value="rpmI_bact"/>
    <property type="match status" value="1"/>
</dbReference>
<dbReference type="PANTHER" id="PTHR33343">
    <property type="entry name" value="54S RIBOSOMAL PROTEIN BL35M"/>
    <property type="match status" value="1"/>
</dbReference>
<dbReference type="PANTHER" id="PTHR33343:SF1">
    <property type="entry name" value="LARGE RIBOSOMAL SUBUNIT PROTEIN BL35M"/>
    <property type="match status" value="1"/>
</dbReference>
<dbReference type="Pfam" id="PF01632">
    <property type="entry name" value="Ribosomal_L35p"/>
    <property type="match status" value="1"/>
</dbReference>
<dbReference type="PRINTS" id="PR00064">
    <property type="entry name" value="RIBOSOMALL35"/>
</dbReference>
<dbReference type="SUPFAM" id="SSF143034">
    <property type="entry name" value="L35p-like"/>
    <property type="match status" value="1"/>
</dbReference>
<dbReference type="PROSITE" id="PS00936">
    <property type="entry name" value="RIBOSOMAL_L35"/>
    <property type="match status" value="1"/>
</dbReference>
<evidence type="ECO:0000255" key="1">
    <source>
        <dbReference type="HAMAP-Rule" id="MF_00514"/>
    </source>
</evidence>
<evidence type="ECO:0000256" key="2">
    <source>
        <dbReference type="SAM" id="MobiDB-lite"/>
    </source>
</evidence>
<evidence type="ECO:0000305" key="3"/>
<protein>
    <recommendedName>
        <fullName evidence="1">Large ribosomal subunit protein bL35</fullName>
    </recommendedName>
    <alternativeName>
        <fullName evidence="3">50S ribosomal protein L35</fullName>
    </alternativeName>
</protein>
<proteinExistence type="inferred from homology"/>